<reference key="1">
    <citation type="journal article" date="2004" name="Nature">
        <title>The DNA sequence and comparative analysis of human chromosome 10.</title>
        <authorList>
            <person name="Deloukas P."/>
            <person name="Earthrowl M.E."/>
            <person name="Grafham D.V."/>
            <person name="Rubenfield M."/>
            <person name="French L."/>
            <person name="Steward C.A."/>
            <person name="Sims S.K."/>
            <person name="Jones M.C."/>
            <person name="Searle S."/>
            <person name="Scott C."/>
            <person name="Howe K."/>
            <person name="Hunt S.E."/>
            <person name="Andrews T.D."/>
            <person name="Gilbert J.G.R."/>
            <person name="Swarbreck D."/>
            <person name="Ashurst J.L."/>
            <person name="Taylor A."/>
            <person name="Battles J."/>
            <person name="Bird C.P."/>
            <person name="Ainscough R."/>
            <person name="Almeida J.P."/>
            <person name="Ashwell R.I.S."/>
            <person name="Ambrose K.D."/>
            <person name="Babbage A.K."/>
            <person name="Bagguley C.L."/>
            <person name="Bailey J."/>
            <person name="Banerjee R."/>
            <person name="Bates K."/>
            <person name="Beasley H."/>
            <person name="Bray-Allen S."/>
            <person name="Brown A.J."/>
            <person name="Brown J.Y."/>
            <person name="Burford D.C."/>
            <person name="Burrill W."/>
            <person name="Burton J."/>
            <person name="Cahill P."/>
            <person name="Camire D."/>
            <person name="Carter N.P."/>
            <person name="Chapman J.C."/>
            <person name="Clark S.Y."/>
            <person name="Clarke G."/>
            <person name="Clee C.M."/>
            <person name="Clegg S."/>
            <person name="Corby N."/>
            <person name="Coulson A."/>
            <person name="Dhami P."/>
            <person name="Dutta I."/>
            <person name="Dunn M."/>
            <person name="Faulkner L."/>
            <person name="Frankish A."/>
            <person name="Frankland J.A."/>
            <person name="Garner P."/>
            <person name="Garnett J."/>
            <person name="Gribble S."/>
            <person name="Griffiths C."/>
            <person name="Grocock R."/>
            <person name="Gustafson E."/>
            <person name="Hammond S."/>
            <person name="Harley J.L."/>
            <person name="Hart E."/>
            <person name="Heath P.D."/>
            <person name="Ho T.P."/>
            <person name="Hopkins B."/>
            <person name="Horne J."/>
            <person name="Howden P.J."/>
            <person name="Huckle E."/>
            <person name="Hynds C."/>
            <person name="Johnson C."/>
            <person name="Johnson D."/>
            <person name="Kana A."/>
            <person name="Kay M."/>
            <person name="Kimberley A.M."/>
            <person name="Kershaw J.K."/>
            <person name="Kokkinaki M."/>
            <person name="Laird G.K."/>
            <person name="Lawlor S."/>
            <person name="Lee H.M."/>
            <person name="Leongamornlert D.A."/>
            <person name="Laird G."/>
            <person name="Lloyd C."/>
            <person name="Lloyd D.M."/>
            <person name="Loveland J."/>
            <person name="Lovell J."/>
            <person name="McLaren S."/>
            <person name="McLay K.E."/>
            <person name="McMurray A."/>
            <person name="Mashreghi-Mohammadi M."/>
            <person name="Matthews L."/>
            <person name="Milne S."/>
            <person name="Nickerson T."/>
            <person name="Nguyen M."/>
            <person name="Overton-Larty E."/>
            <person name="Palmer S.A."/>
            <person name="Pearce A.V."/>
            <person name="Peck A.I."/>
            <person name="Pelan S."/>
            <person name="Phillimore B."/>
            <person name="Porter K."/>
            <person name="Rice C.M."/>
            <person name="Rogosin A."/>
            <person name="Ross M.T."/>
            <person name="Sarafidou T."/>
            <person name="Sehra H.K."/>
            <person name="Shownkeen R."/>
            <person name="Skuce C.D."/>
            <person name="Smith M."/>
            <person name="Standring L."/>
            <person name="Sycamore N."/>
            <person name="Tester J."/>
            <person name="Thorpe A."/>
            <person name="Torcasso W."/>
            <person name="Tracey A."/>
            <person name="Tromans A."/>
            <person name="Tsolas J."/>
            <person name="Wall M."/>
            <person name="Walsh J."/>
            <person name="Wang H."/>
            <person name="Weinstock K."/>
            <person name="West A.P."/>
            <person name="Willey D.L."/>
            <person name="Whitehead S.L."/>
            <person name="Wilming L."/>
            <person name="Wray P.W."/>
            <person name="Young L."/>
            <person name="Chen Y."/>
            <person name="Lovering R.C."/>
            <person name="Moschonas N.K."/>
            <person name="Siebert R."/>
            <person name="Fechtel K."/>
            <person name="Bentley D."/>
            <person name="Durbin R.M."/>
            <person name="Hubbard T."/>
            <person name="Doucette-Stamm L."/>
            <person name="Beck S."/>
            <person name="Smith D.R."/>
            <person name="Rogers J."/>
        </authorList>
    </citation>
    <scope>NUCLEOTIDE SEQUENCE [LARGE SCALE GENOMIC DNA]</scope>
</reference>
<protein>
    <recommendedName>
        <fullName evidence="4">Neuropeptide Y receptor type 4-2</fullName>
    </recommendedName>
</protein>
<accession>P0DQD5</accession>
<keyword id="KW-1003">Cell membrane</keyword>
<keyword id="KW-1015">Disulfide bond</keyword>
<keyword id="KW-0297">G-protein coupled receptor</keyword>
<keyword id="KW-0325">Glycoprotein</keyword>
<keyword id="KW-0449">Lipoprotein</keyword>
<keyword id="KW-0472">Membrane</keyword>
<keyword id="KW-0564">Palmitate</keyword>
<keyword id="KW-0675">Receptor</keyword>
<keyword id="KW-1185">Reference proteome</keyword>
<keyword id="KW-0807">Transducer</keyword>
<keyword id="KW-0812">Transmembrane</keyword>
<keyword id="KW-1133">Transmembrane helix</keyword>
<sequence>MNTSHLLALLLPKSPQGENRSKPLGTPYNFSEHCQDSVDVMVFIVTSYSIETVVGVLGNLCLMCVTVRQKEKANVTNLLIANLAFSDFLMCLLCQPLTAVYTIMDYWIFGETLCKMSAFIQCMSVTVSILSLVLVALERHQLIINPTGWKPSISQAYLGIVLIWVIACVLSLPFLANSILENVFHKNHSKALEFLADKVVCTESWPLAHHRTIYTTFLLLFQYCLPLGFILVCYARIYRRLQRQGRVFHKGTYSLRAGHMKQVNVVLVVMVVAFAVLWLPLHVFNSLEDWHHEAIPICHGNLIFLVCHLLAMASTCVNPFIYGFLNTNFKKEIKALVLTCQQSAPLEESEHLPLSTVHTEVSKGSLRLSGRSNPI</sequence>
<comment type="function">
    <text evidence="1">G protein-coupled receptor for PPY/pancreatic polypeptide/PP, NPY/neuropeptide Y and PYY/peptide YY that is negatively coupled to cAMP. The rank order of affinity for these polypeptides and their derivatives is PP, PP (2-36) and [Ile-31, Gln-34] PP &gt; [Pro-34] PYY &gt; PYY and [Leu-31, Pro-34] NPY &gt; NPY &gt; PYY (3-36) and NPY (2-36) &gt; PP (13-36) &gt; PP (31-36) &gt; NPY free acid.</text>
</comment>
<comment type="subcellular location">
    <subcellularLocation>
        <location evidence="1">Cell membrane</location>
        <topology evidence="2">Multi-pass membrane protein</topology>
    </subcellularLocation>
</comment>
<comment type="similarity">
    <text evidence="3">Belongs to the G-protein coupled receptor 1 family.</text>
</comment>
<dbReference type="EMBL" id="AC245041">
    <property type="status" value="NOT_ANNOTATED_CDS"/>
    <property type="molecule type" value="Genomic_DNA"/>
</dbReference>
<dbReference type="CCDS" id="CCDS81459.1"/>
<dbReference type="RefSeq" id="NP_001265724.1">
    <property type="nucleotide sequence ID" value="NM_001278795.2"/>
</dbReference>
<dbReference type="RefSeq" id="NP_001382182.1">
    <property type="nucleotide sequence ID" value="NM_001395253.1"/>
</dbReference>
<dbReference type="RefSeq" id="XP_005277701.1">
    <property type="nucleotide sequence ID" value="XM_005277644.3"/>
</dbReference>
<dbReference type="RefSeq" id="XP_006717608.1">
    <property type="nucleotide sequence ID" value="XM_006717545.4"/>
</dbReference>
<dbReference type="RefSeq" id="XP_011537416.1">
    <property type="nucleotide sequence ID" value="XM_011539114.2"/>
</dbReference>
<dbReference type="RefSeq" id="XP_011537417.1">
    <property type="nucleotide sequence ID" value="XM_011539115.3"/>
</dbReference>
<dbReference type="RefSeq" id="XP_011547675.1">
    <property type="nucleotide sequence ID" value="XM_011549373.2"/>
</dbReference>
<dbReference type="RefSeq" id="XP_011547676.1">
    <property type="nucleotide sequence ID" value="XM_011549374.2"/>
</dbReference>
<dbReference type="RefSeq" id="XP_011547677.1">
    <property type="nucleotide sequence ID" value="XM_011549375.2"/>
</dbReference>
<dbReference type="RefSeq" id="XP_011547678.1">
    <property type="nucleotide sequence ID" value="XM_011549376.2"/>
</dbReference>
<dbReference type="RefSeq" id="XP_016854962.1">
    <property type="nucleotide sequence ID" value="XM_016999473.1"/>
</dbReference>
<dbReference type="RefSeq" id="XP_016854963.1">
    <property type="nucleotide sequence ID" value="XM_016999474.1"/>
</dbReference>
<dbReference type="RefSeq" id="XP_016870952.1">
    <property type="nucleotide sequence ID" value="XM_017015463.1"/>
</dbReference>
<dbReference type="RefSeq" id="XP_016870953.1">
    <property type="nucleotide sequence ID" value="XM_017015464.2"/>
</dbReference>
<dbReference type="RefSeq" id="XP_054188411.1">
    <property type="nucleotide sequence ID" value="XM_054332436.1"/>
</dbReference>
<dbReference type="RefSeq" id="XP_054188412.1">
    <property type="nucleotide sequence ID" value="XM_054332437.1"/>
</dbReference>
<dbReference type="RefSeq" id="XP_054188413.1">
    <property type="nucleotide sequence ID" value="XM_054332438.1"/>
</dbReference>
<dbReference type="SMR" id="P0DQD5"/>
<dbReference type="FunCoup" id="P0DQD5">
    <property type="interactions" value="937"/>
</dbReference>
<dbReference type="STRING" id="9606.ENSP00000490174"/>
<dbReference type="GlyCosmos" id="P0DQD5">
    <property type="glycosylation" value="4 sites, No reported glycans"/>
</dbReference>
<dbReference type="GlyGen" id="P0DQD5">
    <property type="glycosylation" value="4 sites"/>
</dbReference>
<dbReference type="MassIVE" id="P0DQD5"/>
<dbReference type="PaxDb" id="9606-ENSP00000363431"/>
<dbReference type="PeptideAtlas" id="P0DQD5"/>
<dbReference type="Ensembl" id="ENST00000576178.7">
    <property type="protein sequence ID" value="ENSP00000490174.1"/>
    <property type="gene ID" value="ENSG00000264717.6"/>
</dbReference>
<dbReference type="Ensembl" id="ENST00000613306.1">
    <property type="protein sequence ID" value="ENSP00000489924.1"/>
    <property type="gene ID" value="ENSG00000264717.6"/>
</dbReference>
<dbReference type="Ensembl" id="ENST00000671787.1">
    <property type="protein sequence ID" value="ENSP00000500673.1"/>
    <property type="gene ID" value="ENSG00000288157.1"/>
</dbReference>
<dbReference type="Ensembl" id="ENST00000671991.1">
    <property type="protein sequence ID" value="ENSP00000499999.1"/>
    <property type="gene ID" value="ENSG00000288157.1"/>
</dbReference>
<dbReference type="GeneID" id="100996758"/>
<dbReference type="KEGG" id="hsa:100996758"/>
<dbReference type="MANE-Select" id="ENST00000576178.7">
    <property type="protein sequence ID" value="ENSP00000490174.1"/>
    <property type="RefSeq nucleotide sequence ID" value="NM_001395253.1"/>
    <property type="RefSeq protein sequence ID" value="NP_001382182.1"/>
</dbReference>
<dbReference type="AGR" id="HGNC:52383"/>
<dbReference type="CTD" id="100996758"/>
<dbReference type="DisGeNET" id="100996758"/>
<dbReference type="GeneCards" id="NPY4R2"/>
<dbReference type="HGNC" id="HGNC:52383">
    <property type="gene designation" value="NPY4R2"/>
</dbReference>
<dbReference type="HPA" id="ENSG00000264717">
    <property type="expression patterns" value="Tissue enhanced (intestine)"/>
</dbReference>
<dbReference type="neXtProt" id="NX_P0DQD5"/>
<dbReference type="VEuPathDB" id="HostDB:ENSG00000264717"/>
<dbReference type="GeneTree" id="ENSGT00940000161927"/>
<dbReference type="InParanoid" id="P0DQD5"/>
<dbReference type="OMA" id="AYSSQAW"/>
<dbReference type="OrthoDB" id="9046662at2759"/>
<dbReference type="PAN-GO" id="P0DQD5">
    <property type="GO annotations" value="5 GO annotations based on evolutionary models"/>
</dbReference>
<dbReference type="PRO" id="PR:P0DQD5"/>
<dbReference type="Proteomes" id="UP000005640">
    <property type="component" value="Chromosome 10"/>
</dbReference>
<dbReference type="Bgee" id="ENSG00000264717">
    <property type="expression patterns" value="Expressed in colonic epithelium and 43 other cell types or tissues"/>
</dbReference>
<dbReference type="GO" id="GO:0043005">
    <property type="term" value="C:neuron projection"/>
    <property type="evidence" value="ECO:0000318"/>
    <property type="project" value="GO_Central"/>
</dbReference>
<dbReference type="GO" id="GO:0005886">
    <property type="term" value="C:plasma membrane"/>
    <property type="evidence" value="ECO:0000318"/>
    <property type="project" value="GO_Central"/>
</dbReference>
<dbReference type="GO" id="GO:0042923">
    <property type="term" value="F:neuropeptide binding"/>
    <property type="evidence" value="ECO:0000318"/>
    <property type="project" value="GO_Central"/>
</dbReference>
<dbReference type="GO" id="GO:0001602">
    <property type="term" value="F:pancreatic polypeptide receptor activity"/>
    <property type="evidence" value="ECO:0000318"/>
    <property type="project" value="GO_Central"/>
</dbReference>
<dbReference type="GO" id="GO:0007186">
    <property type="term" value="P:G protein-coupled receptor signaling pathway"/>
    <property type="evidence" value="ECO:0000318"/>
    <property type="project" value="GO_Central"/>
</dbReference>
<dbReference type="CDD" id="cd15397">
    <property type="entry name" value="7tmA_NPY4R"/>
    <property type="match status" value="1"/>
</dbReference>
<dbReference type="FunFam" id="1.20.1070.10:FF:000062">
    <property type="entry name" value="Neuropeptide Y receptor type 1"/>
    <property type="match status" value="1"/>
</dbReference>
<dbReference type="Gene3D" id="1.20.1070.10">
    <property type="entry name" value="Rhodopsin 7-helix transmembrane proteins"/>
    <property type="match status" value="1"/>
</dbReference>
<dbReference type="InterPro" id="IPR000276">
    <property type="entry name" value="GPCR_Rhodpsn"/>
</dbReference>
<dbReference type="InterPro" id="IPR017452">
    <property type="entry name" value="GPCR_Rhodpsn_7TM"/>
</dbReference>
<dbReference type="InterPro" id="IPR001933">
    <property type="entry name" value="NPY4_rcpt"/>
</dbReference>
<dbReference type="InterPro" id="IPR000611">
    <property type="entry name" value="NPY_rcpt"/>
</dbReference>
<dbReference type="PANTHER" id="PTHR24235">
    <property type="entry name" value="NEUROPEPTIDE Y RECEPTOR"/>
    <property type="match status" value="1"/>
</dbReference>
<dbReference type="PANTHER" id="PTHR24235:SF25">
    <property type="entry name" value="NEUROPEPTIDE Y RECEPTOR TYPE 4-RELATED"/>
    <property type="match status" value="1"/>
</dbReference>
<dbReference type="Pfam" id="PF00001">
    <property type="entry name" value="7tm_1"/>
    <property type="match status" value="1"/>
</dbReference>
<dbReference type="PRINTS" id="PR00237">
    <property type="entry name" value="GPCRRHODOPSN"/>
</dbReference>
<dbReference type="PRINTS" id="PR01015">
    <property type="entry name" value="NRPEPTIDEY4R"/>
</dbReference>
<dbReference type="PRINTS" id="PR01012">
    <property type="entry name" value="NRPEPTIDEYR"/>
</dbReference>
<dbReference type="SUPFAM" id="SSF81321">
    <property type="entry name" value="Family A G protein-coupled receptor-like"/>
    <property type="match status" value="1"/>
</dbReference>
<dbReference type="PROSITE" id="PS00237">
    <property type="entry name" value="G_PROTEIN_RECEP_F1_1"/>
    <property type="match status" value="1"/>
</dbReference>
<dbReference type="PROSITE" id="PS50262">
    <property type="entry name" value="G_PROTEIN_RECEP_F1_2"/>
    <property type="match status" value="1"/>
</dbReference>
<proteinExistence type="inferred from homology"/>
<feature type="chain" id="PRO_0000446660" description="Neuropeptide Y receptor type 4-2">
    <location>
        <begin position="1"/>
        <end position="375"/>
    </location>
</feature>
<feature type="topological domain" description="Extracellular" evidence="4">
    <location>
        <begin position="1"/>
        <end position="39"/>
    </location>
</feature>
<feature type="transmembrane region" description="Helical; Name=1" evidence="2">
    <location>
        <begin position="40"/>
        <end position="60"/>
    </location>
</feature>
<feature type="topological domain" description="Cytoplasmic" evidence="4">
    <location>
        <begin position="61"/>
        <end position="87"/>
    </location>
</feature>
<feature type="transmembrane region" description="Helical; Name=2" evidence="2">
    <location>
        <begin position="88"/>
        <end position="108"/>
    </location>
</feature>
<feature type="topological domain" description="Extracellular" evidence="4">
    <location>
        <begin position="109"/>
        <end position="116"/>
    </location>
</feature>
<feature type="transmembrane region" description="Helical; Name=3" evidence="2">
    <location>
        <begin position="117"/>
        <end position="137"/>
    </location>
</feature>
<feature type="topological domain" description="Cytoplasmic" evidence="4">
    <location>
        <begin position="138"/>
        <end position="155"/>
    </location>
</feature>
<feature type="transmembrane region" description="Helical; Name=4" evidence="2">
    <location>
        <begin position="156"/>
        <end position="176"/>
    </location>
</feature>
<feature type="topological domain" description="Extracellular" evidence="4">
    <location>
        <begin position="177"/>
        <end position="212"/>
    </location>
</feature>
<feature type="transmembrane region" description="Helical; Name=5" evidence="2">
    <location>
        <begin position="213"/>
        <end position="233"/>
    </location>
</feature>
<feature type="topological domain" description="Cytoplasmic" evidence="4">
    <location>
        <begin position="234"/>
        <end position="263"/>
    </location>
</feature>
<feature type="transmembrane region" description="Helical; Name=6" evidence="2">
    <location>
        <begin position="264"/>
        <end position="284"/>
    </location>
</feature>
<feature type="topological domain" description="Extracellular" evidence="4">
    <location>
        <begin position="285"/>
        <end position="301"/>
    </location>
</feature>
<feature type="transmembrane region" description="Helical; Name=7" evidence="2">
    <location>
        <begin position="302"/>
        <end position="322"/>
    </location>
</feature>
<feature type="topological domain" description="Cytoplasmic" evidence="4">
    <location>
        <begin position="323"/>
        <end position="375"/>
    </location>
</feature>
<feature type="lipid moiety-binding region" description="S-palmitoyl cysteine" evidence="2">
    <location>
        <position position="340"/>
    </location>
</feature>
<feature type="glycosylation site" description="N-linked (GlcNAc...) asparagine" evidence="2">
    <location>
        <position position="2"/>
    </location>
</feature>
<feature type="glycosylation site" description="N-linked (GlcNAc...) asparagine" evidence="2">
    <location>
        <position position="19"/>
    </location>
</feature>
<feature type="glycosylation site" description="N-linked (GlcNAc...) asparagine" evidence="2">
    <location>
        <position position="29"/>
    </location>
</feature>
<feature type="glycosylation site" description="N-linked (GlcNAc...) asparagine" evidence="2">
    <location>
        <position position="187"/>
    </location>
</feature>
<feature type="disulfide bond" evidence="3">
    <location>
        <begin position="114"/>
        <end position="201"/>
    </location>
</feature>
<evidence type="ECO:0000250" key="1">
    <source>
        <dbReference type="UniProtKB" id="P50391"/>
    </source>
</evidence>
<evidence type="ECO:0000255" key="2"/>
<evidence type="ECO:0000255" key="3">
    <source>
        <dbReference type="PROSITE-ProRule" id="PRU00521"/>
    </source>
</evidence>
<evidence type="ECO:0000305" key="4"/>
<evidence type="ECO:0000312" key="5">
    <source>
        <dbReference type="HGNC" id="HGNC:52383"/>
    </source>
</evidence>
<gene>
    <name evidence="5" type="primary">NPY4R2</name>
</gene>
<organism>
    <name type="scientific">Homo sapiens</name>
    <name type="common">Human</name>
    <dbReference type="NCBI Taxonomy" id="9606"/>
    <lineage>
        <taxon>Eukaryota</taxon>
        <taxon>Metazoa</taxon>
        <taxon>Chordata</taxon>
        <taxon>Craniata</taxon>
        <taxon>Vertebrata</taxon>
        <taxon>Euteleostomi</taxon>
        <taxon>Mammalia</taxon>
        <taxon>Eutheria</taxon>
        <taxon>Euarchontoglires</taxon>
        <taxon>Primates</taxon>
        <taxon>Haplorrhini</taxon>
        <taxon>Catarrhini</taxon>
        <taxon>Hominidae</taxon>
        <taxon>Homo</taxon>
    </lineage>
</organism>
<name>NPY42_HUMAN</name>